<sequence>MSRLATRFEKLQSQQRKALVSYVMAGDPQPQVTVPLLHKMVAAGVDVIELGLPFSDPMADGPVIALAAERALAAGTNTLDALNMVKEFREQDQETPVVLMGYLNPVEVIGYEKFVSYAKQCGVDGLLLVDLPPEESKEFGAILKQHDMDQIFLLAPTSTDQRIQHVANQASGFIYYVSLKGVTGAATLDTSEAAARIEKIKGMTNVPVGVGFGISDAASAKAMGSVADAVIVGSAFVKSFATLAADEAVEQTVNKVKELRAALDELV</sequence>
<accession>B7GWQ5</accession>
<protein>
    <recommendedName>
        <fullName evidence="1">Tryptophan synthase alpha chain</fullName>
        <ecNumber evidence="1">4.2.1.20</ecNumber>
    </recommendedName>
</protein>
<evidence type="ECO:0000255" key="1">
    <source>
        <dbReference type="HAMAP-Rule" id="MF_00131"/>
    </source>
</evidence>
<name>TRPA_ACIB3</name>
<proteinExistence type="inferred from homology"/>
<reference key="1">
    <citation type="journal article" date="2008" name="J. Bacteriol.">
        <title>Comparative genome sequence analysis of multidrug-resistant Acinetobacter baumannii.</title>
        <authorList>
            <person name="Adams M.D."/>
            <person name="Goglin K."/>
            <person name="Molyneaux N."/>
            <person name="Hujer K.M."/>
            <person name="Lavender H."/>
            <person name="Jamison J.J."/>
            <person name="MacDonald I.J."/>
            <person name="Martin K.M."/>
            <person name="Russo T."/>
            <person name="Campagnari A.A."/>
            <person name="Hujer A.M."/>
            <person name="Bonomo R.A."/>
            <person name="Gill S.R."/>
        </authorList>
    </citation>
    <scope>NUCLEOTIDE SEQUENCE [LARGE SCALE GENOMIC DNA]</scope>
    <source>
        <strain>AB307-0294</strain>
    </source>
</reference>
<keyword id="KW-0028">Amino-acid biosynthesis</keyword>
<keyword id="KW-0057">Aromatic amino acid biosynthesis</keyword>
<keyword id="KW-0456">Lyase</keyword>
<keyword id="KW-0822">Tryptophan biosynthesis</keyword>
<comment type="function">
    <text evidence="1">The alpha subunit is responsible for the aldol cleavage of indoleglycerol phosphate to indole and glyceraldehyde 3-phosphate.</text>
</comment>
<comment type="catalytic activity">
    <reaction evidence="1">
        <text>(1S,2R)-1-C-(indol-3-yl)glycerol 3-phosphate + L-serine = D-glyceraldehyde 3-phosphate + L-tryptophan + H2O</text>
        <dbReference type="Rhea" id="RHEA:10532"/>
        <dbReference type="ChEBI" id="CHEBI:15377"/>
        <dbReference type="ChEBI" id="CHEBI:33384"/>
        <dbReference type="ChEBI" id="CHEBI:57912"/>
        <dbReference type="ChEBI" id="CHEBI:58866"/>
        <dbReference type="ChEBI" id="CHEBI:59776"/>
        <dbReference type="EC" id="4.2.1.20"/>
    </reaction>
</comment>
<comment type="pathway">
    <text evidence="1">Amino-acid biosynthesis; L-tryptophan biosynthesis; L-tryptophan from chorismate: step 5/5.</text>
</comment>
<comment type="subunit">
    <text evidence="1">Tetramer of two alpha and two beta chains.</text>
</comment>
<comment type="similarity">
    <text evidence="1">Belongs to the TrpA family.</text>
</comment>
<feature type="chain" id="PRO_1000117726" description="Tryptophan synthase alpha chain">
    <location>
        <begin position="1"/>
        <end position="267"/>
    </location>
</feature>
<feature type="active site" description="Proton acceptor" evidence="1">
    <location>
        <position position="49"/>
    </location>
</feature>
<feature type="active site" description="Proton acceptor" evidence="1">
    <location>
        <position position="60"/>
    </location>
</feature>
<dbReference type="EC" id="4.2.1.20" evidence="1"/>
<dbReference type="EMBL" id="CP001172">
    <property type="protein sequence ID" value="ACJ56734.1"/>
    <property type="molecule type" value="Genomic_DNA"/>
</dbReference>
<dbReference type="RefSeq" id="WP_000088559.1">
    <property type="nucleotide sequence ID" value="NZ_CP001172.1"/>
</dbReference>
<dbReference type="SMR" id="B7GWQ5"/>
<dbReference type="GeneID" id="92895147"/>
<dbReference type="HOGENOM" id="CLU_016734_0_0_6"/>
<dbReference type="UniPathway" id="UPA00035">
    <property type="reaction ID" value="UER00044"/>
</dbReference>
<dbReference type="Proteomes" id="UP000006924">
    <property type="component" value="Chromosome"/>
</dbReference>
<dbReference type="GO" id="GO:0005829">
    <property type="term" value="C:cytosol"/>
    <property type="evidence" value="ECO:0007669"/>
    <property type="project" value="TreeGrafter"/>
</dbReference>
<dbReference type="GO" id="GO:0004834">
    <property type="term" value="F:tryptophan synthase activity"/>
    <property type="evidence" value="ECO:0007669"/>
    <property type="project" value="UniProtKB-UniRule"/>
</dbReference>
<dbReference type="CDD" id="cd04724">
    <property type="entry name" value="Tryptophan_synthase_alpha"/>
    <property type="match status" value="1"/>
</dbReference>
<dbReference type="FunFam" id="3.20.20.70:FF:000037">
    <property type="entry name" value="Tryptophan synthase alpha chain"/>
    <property type="match status" value="1"/>
</dbReference>
<dbReference type="Gene3D" id="3.20.20.70">
    <property type="entry name" value="Aldolase class I"/>
    <property type="match status" value="1"/>
</dbReference>
<dbReference type="HAMAP" id="MF_00131">
    <property type="entry name" value="Trp_synth_alpha"/>
    <property type="match status" value="1"/>
</dbReference>
<dbReference type="InterPro" id="IPR013785">
    <property type="entry name" value="Aldolase_TIM"/>
</dbReference>
<dbReference type="InterPro" id="IPR011060">
    <property type="entry name" value="RibuloseP-bd_barrel"/>
</dbReference>
<dbReference type="InterPro" id="IPR018204">
    <property type="entry name" value="Trp_synthase_alpha_AS"/>
</dbReference>
<dbReference type="InterPro" id="IPR002028">
    <property type="entry name" value="Trp_synthase_suA"/>
</dbReference>
<dbReference type="NCBIfam" id="TIGR00262">
    <property type="entry name" value="trpA"/>
    <property type="match status" value="1"/>
</dbReference>
<dbReference type="PANTHER" id="PTHR43406:SF1">
    <property type="entry name" value="TRYPTOPHAN SYNTHASE ALPHA CHAIN, CHLOROPLASTIC"/>
    <property type="match status" value="1"/>
</dbReference>
<dbReference type="PANTHER" id="PTHR43406">
    <property type="entry name" value="TRYPTOPHAN SYNTHASE, ALPHA CHAIN"/>
    <property type="match status" value="1"/>
</dbReference>
<dbReference type="Pfam" id="PF00290">
    <property type="entry name" value="Trp_syntA"/>
    <property type="match status" value="1"/>
</dbReference>
<dbReference type="SUPFAM" id="SSF51366">
    <property type="entry name" value="Ribulose-phoshate binding barrel"/>
    <property type="match status" value="1"/>
</dbReference>
<dbReference type="PROSITE" id="PS00167">
    <property type="entry name" value="TRP_SYNTHASE_ALPHA"/>
    <property type="match status" value="1"/>
</dbReference>
<organism>
    <name type="scientific">Acinetobacter baumannii (strain AB307-0294)</name>
    <dbReference type="NCBI Taxonomy" id="557600"/>
    <lineage>
        <taxon>Bacteria</taxon>
        <taxon>Pseudomonadati</taxon>
        <taxon>Pseudomonadota</taxon>
        <taxon>Gammaproteobacteria</taxon>
        <taxon>Moraxellales</taxon>
        <taxon>Moraxellaceae</taxon>
        <taxon>Acinetobacter</taxon>
        <taxon>Acinetobacter calcoaceticus/baumannii complex</taxon>
    </lineage>
</organism>
<gene>
    <name evidence="1" type="primary">trpA</name>
    <name type="ordered locus">ABBFA_000592</name>
</gene>